<proteinExistence type="inferred from homology"/>
<organism>
    <name type="scientific">Geotalea uraniireducens (strain Rf4)</name>
    <name type="common">Geobacter uraniireducens</name>
    <dbReference type="NCBI Taxonomy" id="351605"/>
    <lineage>
        <taxon>Bacteria</taxon>
        <taxon>Pseudomonadati</taxon>
        <taxon>Thermodesulfobacteriota</taxon>
        <taxon>Desulfuromonadia</taxon>
        <taxon>Geobacterales</taxon>
        <taxon>Geobacteraceae</taxon>
        <taxon>Geotalea</taxon>
    </lineage>
</organism>
<sequence length="876" mass="96097">MTGKEIRAQFFKFFEERGHTVVESSNLIPRNDPTLLFTNAGMNQFKDVFLGLEKRDYVRACSSQKCVRAGGKHNDLENVGRTARHHTFFEMLGNFSFGDYFKKEAIAFAWEFLTKELKLDKDRLYVTVYTDDDEAADIWNRQEGVPLERIYRFGEKDNFWSMGDTGPCGPCTEIFWDNGPGTGCGSPTCEVGCDCDRYMEIWNNVFMQFNRDAQGNLTPLPKPSVDTGMGLERISTVMQGVTSNYDTDLLQGIIKHVEKLSGKRYRQDERDDVSMRVIADHSRAITFLICDGILPSNEGRGYVLRRIMRRAARHAKMLGFAEPALYRIVDAVNTMMGDAYPELLEREEYIKKVIHAEEERFIETLDRGLAILNEEVAALKKEGKSVVPGEVIFKLYDTYGFPVDLTADIVENEGFTIDEDGFALCMERQRLQARENWKGSGEEGLAEIYKTLHGRGIRSAFVGYSEQTAYSAITAILREGAEVAEAVAGEMVEVVVDTTPFYGASGGQAGDTGVISTGSAHLRVVATSKPFPDLTVHRALVTEGTVKAGDAADLRVATEVRGATARNHTATHLLQSALRQVLGEHVKQAGSLVTAERLRFDFTHFSAMTVEELRRVENIVNTYVMDNADVKSLEMAATEAMQSGATALFGEKYGDRVRVVKVGEVSSELCGGTHVRAAGDIGFFKIVGEAGIAAGVRRIEALTGSGALEYVQQLEDEQRSIAVLVKAEGGTALDKVDRLLARQKELQREVEALQARLNASRSADLLAGARETNGIKVLAAKVEMDDPKGLRELADSLKDRLQSGVIVIGCVSAGKANLLVAVTKDLSDRLRAGDIIKSLAPIIGGSGGGKPELAQAGGTKPENLDEALEAAYKIIG</sequence>
<feature type="chain" id="PRO_0000347622" description="Alanine--tRNA ligase">
    <location>
        <begin position="1"/>
        <end position="876"/>
    </location>
</feature>
<feature type="binding site" evidence="1">
    <location>
        <position position="568"/>
    </location>
    <ligand>
        <name>Zn(2+)</name>
        <dbReference type="ChEBI" id="CHEBI:29105"/>
    </ligand>
</feature>
<feature type="binding site" evidence="1">
    <location>
        <position position="572"/>
    </location>
    <ligand>
        <name>Zn(2+)</name>
        <dbReference type="ChEBI" id="CHEBI:29105"/>
    </ligand>
</feature>
<feature type="binding site" evidence="1">
    <location>
        <position position="670"/>
    </location>
    <ligand>
        <name>Zn(2+)</name>
        <dbReference type="ChEBI" id="CHEBI:29105"/>
    </ligand>
</feature>
<feature type="binding site" evidence="1">
    <location>
        <position position="674"/>
    </location>
    <ligand>
        <name>Zn(2+)</name>
        <dbReference type="ChEBI" id="CHEBI:29105"/>
    </ligand>
</feature>
<evidence type="ECO:0000255" key="1">
    <source>
        <dbReference type="HAMAP-Rule" id="MF_00036"/>
    </source>
</evidence>
<dbReference type="EC" id="6.1.1.7" evidence="1"/>
<dbReference type="EMBL" id="CP000698">
    <property type="protein sequence ID" value="ABQ24438.1"/>
    <property type="molecule type" value="Genomic_DNA"/>
</dbReference>
<dbReference type="RefSeq" id="WP_011937167.1">
    <property type="nucleotide sequence ID" value="NC_009483.1"/>
</dbReference>
<dbReference type="SMR" id="A5GD98"/>
<dbReference type="STRING" id="351605.Gura_0222"/>
<dbReference type="KEGG" id="gur:Gura_0222"/>
<dbReference type="HOGENOM" id="CLU_004485_1_1_7"/>
<dbReference type="OrthoDB" id="9803884at2"/>
<dbReference type="Proteomes" id="UP000006695">
    <property type="component" value="Chromosome"/>
</dbReference>
<dbReference type="GO" id="GO:0005829">
    <property type="term" value="C:cytosol"/>
    <property type="evidence" value="ECO:0007669"/>
    <property type="project" value="TreeGrafter"/>
</dbReference>
<dbReference type="GO" id="GO:0004813">
    <property type="term" value="F:alanine-tRNA ligase activity"/>
    <property type="evidence" value="ECO:0007669"/>
    <property type="project" value="UniProtKB-UniRule"/>
</dbReference>
<dbReference type="GO" id="GO:0002161">
    <property type="term" value="F:aminoacyl-tRNA deacylase activity"/>
    <property type="evidence" value="ECO:0007669"/>
    <property type="project" value="TreeGrafter"/>
</dbReference>
<dbReference type="GO" id="GO:0005524">
    <property type="term" value="F:ATP binding"/>
    <property type="evidence" value="ECO:0007669"/>
    <property type="project" value="UniProtKB-UniRule"/>
</dbReference>
<dbReference type="GO" id="GO:0000049">
    <property type="term" value="F:tRNA binding"/>
    <property type="evidence" value="ECO:0007669"/>
    <property type="project" value="UniProtKB-KW"/>
</dbReference>
<dbReference type="GO" id="GO:0008270">
    <property type="term" value="F:zinc ion binding"/>
    <property type="evidence" value="ECO:0007669"/>
    <property type="project" value="UniProtKB-UniRule"/>
</dbReference>
<dbReference type="GO" id="GO:0006419">
    <property type="term" value="P:alanyl-tRNA aminoacylation"/>
    <property type="evidence" value="ECO:0007669"/>
    <property type="project" value="UniProtKB-UniRule"/>
</dbReference>
<dbReference type="GO" id="GO:0045892">
    <property type="term" value="P:negative regulation of DNA-templated transcription"/>
    <property type="evidence" value="ECO:0007669"/>
    <property type="project" value="TreeGrafter"/>
</dbReference>
<dbReference type="CDD" id="cd00673">
    <property type="entry name" value="AlaRS_core"/>
    <property type="match status" value="1"/>
</dbReference>
<dbReference type="FunFam" id="3.10.310.40:FF:000001">
    <property type="entry name" value="Alanine--tRNA ligase"/>
    <property type="match status" value="1"/>
</dbReference>
<dbReference type="FunFam" id="3.30.54.20:FF:000001">
    <property type="entry name" value="Alanine--tRNA ligase"/>
    <property type="match status" value="1"/>
</dbReference>
<dbReference type="FunFam" id="3.30.930.10:FF:000004">
    <property type="entry name" value="Alanine--tRNA ligase"/>
    <property type="match status" value="1"/>
</dbReference>
<dbReference type="FunFam" id="3.30.980.10:FF:000004">
    <property type="entry name" value="Alanine--tRNA ligase, cytoplasmic"/>
    <property type="match status" value="1"/>
</dbReference>
<dbReference type="Gene3D" id="2.40.30.130">
    <property type="match status" value="1"/>
</dbReference>
<dbReference type="Gene3D" id="3.10.310.40">
    <property type="match status" value="1"/>
</dbReference>
<dbReference type="Gene3D" id="3.30.54.20">
    <property type="match status" value="1"/>
</dbReference>
<dbReference type="Gene3D" id="6.10.250.550">
    <property type="match status" value="1"/>
</dbReference>
<dbReference type="Gene3D" id="3.30.930.10">
    <property type="entry name" value="Bira Bifunctional Protein, Domain 2"/>
    <property type="match status" value="1"/>
</dbReference>
<dbReference type="Gene3D" id="3.30.980.10">
    <property type="entry name" value="Threonyl-trna Synthetase, Chain A, domain 2"/>
    <property type="match status" value="1"/>
</dbReference>
<dbReference type="HAMAP" id="MF_00036_B">
    <property type="entry name" value="Ala_tRNA_synth_B"/>
    <property type="match status" value="1"/>
</dbReference>
<dbReference type="InterPro" id="IPR045864">
    <property type="entry name" value="aa-tRNA-synth_II/BPL/LPL"/>
</dbReference>
<dbReference type="InterPro" id="IPR002318">
    <property type="entry name" value="Ala-tRNA-lgiase_IIc"/>
</dbReference>
<dbReference type="InterPro" id="IPR018162">
    <property type="entry name" value="Ala-tRNA-ligase_IIc_anticod-bd"/>
</dbReference>
<dbReference type="InterPro" id="IPR018165">
    <property type="entry name" value="Ala-tRNA-synth_IIc_core"/>
</dbReference>
<dbReference type="InterPro" id="IPR018164">
    <property type="entry name" value="Ala-tRNA-synth_IIc_N"/>
</dbReference>
<dbReference type="InterPro" id="IPR050058">
    <property type="entry name" value="Ala-tRNA_ligase"/>
</dbReference>
<dbReference type="InterPro" id="IPR023033">
    <property type="entry name" value="Ala_tRNA_ligase_euk/bac"/>
</dbReference>
<dbReference type="InterPro" id="IPR003156">
    <property type="entry name" value="DHHA1_dom"/>
</dbReference>
<dbReference type="InterPro" id="IPR018163">
    <property type="entry name" value="Thr/Ala-tRNA-synth_IIc_edit"/>
</dbReference>
<dbReference type="InterPro" id="IPR009000">
    <property type="entry name" value="Transl_B-barrel_sf"/>
</dbReference>
<dbReference type="InterPro" id="IPR012947">
    <property type="entry name" value="tRNA_SAD"/>
</dbReference>
<dbReference type="NCBIfam" id="TIGR00344">
    <property type="entry name" value="alaS"/>
    <property type="match status" value="1"/>
</dbReference>
<dbReference type="PANTHER" id="PTHR11777:SF9">
    <property type="entry name" value="ALANINE--TRNA LIGASE, CYTOPLASMIC"/>
    <property type="match status" value="1"/>
</dbReference>
<dbReference type="PANTHER" id="PTHR11777">
    <property type="entry name" value="ALANYL-TRNA SYNTHETASE"/>
    <property type="match status" value="1"/>
</dbReference>
<dbReference type="Pfam" id="PF02272">
    <property type="entry name" value="DHHA1"/>
    <property type="match status" value="1"/>
</dbReference>
<dbReference type="Pfam" id="PF01411">
    <property type="entry name" value="tRNA-synt_2c"/>
    <property type="match status" value="1"/>
</dbReference>
<dbReference type="Pfam" id="PF07973">
    <property type="entry name" value="tRNA_SAD"/>
    <property type="match status" value="1"/>
</dbReference>
<dbReference type="PRINTS" id="PR00980">
    <property type="entry name" value="TRNASYNTHALA"/>
</dbReference>
<dbReference type="SMART" id="SM00863">
    <property type="entry name" value="tRNA_SAD"/>
    <property type="match status" value="1"/>
</dbReference>
<dbReference type="SUPFAM" id="SSF55681">
    <property type="entry name" value="Class II aaRS and biotin synthetases"/>
    <property type="match status" value="1"/>
</dbReference>
<dbReference type="SUPFAM" id="SSF101353">
    <property type="entry name" value="Putative anticodon-binding domain of alanyl-tRNA synthetase (AlaRS)"/>
    <property type="match status" value="1"/>
</dbReference>
<dbReference type="SUPFAM" id="SSF55186">
    <property type="entry name" value="ThrRS/AlaRS common domain"/>
    <property type="match status" value="1"/>
</dbReference>
<dbReference type="SUPFAM" id="SSF50447">
    <property type="entry name" value="Translation proteins"/>
    <property type="match status" value="1"/>
</dbReference>
<dbReference type="PROSITE" id="PS50860">
    <property type="entry name" value="AA_TRNA_LIGASE_II_ALA"/>
    <property type="match status" value="1"/>
</dbReference>
<protein>
    <recommendedName>
        <fullName evidence="1">Alanine--tRNA ligase</fullName>
        <ecNumber evidence="1">6.1.1.7</ecNumber>
    </recommendedName>
    <alternativeName>
        <fullName evidence="1">Alanyl-tRNA synthetase</fullName>
        <shortName evidence="1">AlaRS</shortName>
    </alternativeName>
</protein>
<name>SYA_GEOUR</name>
<accession>A5GD98</accession>
<gene>
    <name evidence="1" type="primary">alaS</name>
    <name type="ordered locus">Gura_0222</name>
</gene>
<keyword id="KW-0030">Aminoacyl-tRNA synthetase</keyword>
<keyword id="KW-0067">ATP-binding</keyword>
<keyword id="KW-0963">Cytoplasm</keyword>
<keyword id="KW-0436">Ligase</keyword>
<keyword id="KW-0479">Metal-binding</keyword>
<keyword id="KW-0547">Nucleotide-binding</keyword>
<keyword id="KW-0648">Protein biosynthesis</keyword>
<keyword id="KW-1185">Reference proteome</keyword>
<keyword id="KW-0694">RNA-binding</keyword>
<keyword id="KW-0820">tRNA-binding</keyword>
<keyword id="KW-0862">Zinc</keyword>
<comment type="function">
    <text evidence="1">Catalyzes the attachment of alanine to tRNA(Ala) in a two-step reaction: alanine is first activated by ATP to form Ala-AMP and then transferred to the acceptor end of tRNA(Ala). Also edits incorrectly charged Ser-tRNA(Ala) and Gly-tRNA(Ala) via its editing domain.</text>
</comment>
<comment type="catalytic activity">
    <reaction evidence="1">
        <text>tRNA(Ala) + L-alanine + ATP = L-alanyl-tRNA(Ala) + AMP + diphosphate</text>
        <dbReference type="Rhea" id="RHEA:12540"/>
        <dbReference type="Rhea" id="RHEA-COMP:9657"/>
        <dbReference type="Rhea" id="RHEA-COMP:9923"/>
        <dbReference type="ChEBI" id="CHEBI:30616"/>
        <dbReference type="ChEBI" id="CHEBI:33019"/>
        <dbReference type="ChEBI" id="CHEBI:57972"/>
        <dbReference type="ChEBI" id="CHEBI:78442"/>
        <dbReference type="ChEBI" id="CHEBI:78497"/>
        <dbReference type="ChEBI" id="CHEBI:456215"/>
        <dbReference type="EC" id="6.1.1.7"/>
    </reaction>
</comment>
<comment type="cofactor">
    <cofactor evidence="1">
        <name>Zn(2+)</name>
        <dbReference type="ChEBI" id="CHEBI:29105"/>
    </cofactor>
    <text evidence="1">Binds 1 zinc ion per subunit.</text>
</comment>
<comment type="subcellular location">
    <subcellularLocation>
        <location evidence="1">Cytoplasm</location>
    </subcellularLocation>
</comment>
<comment type="domain">
    <text evidence="1">Consists of three domains; the N-terminal catalytic domain, the editing domain and the C-terminal C-Ala domain. The editing domain removes incorrectly charged amino acids, while the C-Ala domain, along with tRNA(Ala), serves as a bridge to cooperatively bring together the editing and aminoacylation centers thus stimulating deacylation of misacylated tRNAs.</text>
</comment>
<comment type="similarity">
    <text evidence="1">Belongs to the class-II aminoacyl-tRNA synthetase family.</text>
</comment>
<reference key="1">
    <citation type="submission" date="2007-05" db="EMBL/GenBank/DDBJ databases">
        <title>Complete sequence of Geobacter uraniireducens Rf4.</title>
        <authorList>
            <consortium name="US DOE Joint Genome Institute"/>
            <person name="Copeland A."/>
            <person name="Lucas S."/>
            <person name="Lapidus A."/>
            <person name="Barry K."/>
            <person name="Detter J.C."/>
            <person name="Glavina del Rio T."/>
            <person name="Hammon N."/>
            <person name="Israni S."/>
            <person name="Dalin E."/>
            <person name="Tice H."/>
            <person name="Pitluck S."/>
            <person name="Chertkov O."/>
            <person name="Brettin T."/>
            <person name="Bruce D."/>
            <person name="Han C."/>
            <person name="Schmutz J."/>
            <person name="Larimer F."/>
            <person name="Land M."/>
            <person name="Hauser L."/>
            <person name="Kyrpides N."/>
            <person name="Mikhailova N."/>
            <person name="Shelobolina E."/>
            <person name="Aklujkar M."/>
            <person name="Lovley D."/>
            <person name="Richardson P."/>
        </authorList>
    </citation>
    <scope>NUCLEOTIDE SEQUENCE [LARGE SCALE GENOMIC DNA]</scope>
    <source>
        <strain>ATCC BAA-1134 / JCM 13001 / Rf4</strain>
    </source>
</reference>